<keyword id="KW-0963">Cytoplasm</keyword>
<keyword id="KW-1185">Reference proteome</keyword>
<keyword id="KW-0687">Ribonucleoprotein</keyword>
<keyword id="KW-0689">Ribosomal protein</keyword>
<gene>
    <name type="primary">rps2202</name>
    <name type="synonym">rps22b</name>
    <name type="ORF">SPAC5D6.01</name>
</gene>
<proteinExistence type="inferred from homology"/>
<protein>
    <recommendedName>
        <fullName evidence="2">Small ribosomal subunit protein uS8B</fullName>
    </recommendedName>
    <alternativeName>
        <fullName>40S ribosomal protein S22-B</fullName>
    </alternativeName>
</protein>
<name>RS22B_SCHPO</name>
<reference key="1">
    <citation type="journal article" date="2002" name="Nature">
        <title>The genome sequence of Schizosaccharomyces pombe.</title>
        <authorList>
            <person name="Wood V."/>
            <person name="Gwilliam R."/>
            <person name="Rajandream M.A."/>
            <person name="Lyne M.H."/>
            <person name="Lyne R."/>
            <person name="Stewart A."/>
            <person name="Sgouros J.G."/>
            <person name="Peat N."/>
            <person name="Hayles J."/>
            <person name="Baker S.G."/>
            <person name="Basham D."/>
            <person name="Bowman S."/>
            <person name="Brooks K."/>
            <person name="Brown D."/>
            <person name="Brown S."/>
            <person name="Chillingworth T."/>
            <person name="Churcher C.M."/>
            <person name="Collins M."/>
            <person name="Connor R."/>
            <person name="Cronin A."/>
            <person name="Davis P."/>
            <person name="Feltwell T."/>
            <person name="Fraser A."/>
            <person name="Gentles S."/>
            <person name="Goble A."/>
            <person name="Hamlin N."/>
            <person name="Harris D.E."/>
            <person name="Hidalgo J."/>
            <person name="Hodgson G."/>
            <person name="Holroyd S."/>
            <person name="Hornsby T."/>
            <person name="Howarth S."/>
            <person name="Huckle E.J."/>
            <person name="Hunt S."/>
            <person name="Jagels K."/>
            <person name="James K.D."/>
            <person name="Jones L."/>
            <person name="Jones M."/>
            <person name="Leather S."/>
            <person name="McDonald S."/>
            <person name="McLean J."/>
            <person name="Mooney P."/>
            <person name="Moule S."/>
            <person name="Mungall K.L."/>
            <person name="Murphy L.D."/>
            <person name="Niblett D."/>
            <person name="Odell C."/>
            <person name="Oliver K."/>
            <person name="O'Neil S."/>
            <person name="Pearson D."/>
            <person name="Quail M.A."/>
            <person name="Rabbinowitsch E."/>
            <person name="Rutherford K.M."/>
            <person name="Rutter S."/>
            <person name="Saunders D."/>
            <person name="Seeger K."/>
            <person name="Sharp S."/>
            <person name="Skelton J."/>
            <person name="Simmonds M.N."/>
            <person name="Squares R."/>
            <person name="Squares S."/>
            <person name="Stevens K."/>
            <person name="Taylor K."/>
            <person name="Taylor R.G."/>
            <person name="Tivey A."/>
            <person name="Walsh S.V."/>
            <person name="Warren T."/>
            <person name="Whitehead S."/>
            <person name="Woodward J.R."/>
            <person name="Volckaert G."/>
            <person name="Aert R."/>
            <person name="Robben J."/>
            <person name="Grymonprez B."/>
            <person name="Weltjens I."/>
            <person name="Vanstreels E."/>
            <person name="Rieger M."/>
            <person name="Schaefer M."/>
            <person name="Mueller-Auer S."/>
            <person name="Gabel C."/>
            <person name="Fuchs M."/>
            <person name="Duesterhoeft A."/>
            <person name="Fritzc C."/>
            <person name="Holzer E."/>
            <person name="Moestl D."/>
            <person name="Hilbert H."/>
            <person name="Borzym K."/>
            <person name="Langer I."/>
            <person name="Beck A."/>
            <person name="Lehrach H."/>
            <person name="Reinhardt R."/>
            <person name="Pohl T.M."/>
            <person name="Eger P."/>
            <person name="Zimmermann W."/>
            <person name="Wedler H."/>
            <person name="Wambutt R."/>
            <person name="Purnelle B."/>
            <person name="Goffeau A."/>
            <person name="Cadieu E."/>
            <person name="Dreano S."/>
            <person name="Gloux S."/>
            <person name="Lelaure V."/>
            <person name="Mottier S."/>
            <person name="Galibert F."/>
            <person name="Aves S.J."/>
            <person name="Xiang Z."/>
            <person name="Hunt C."/>
            <person name="Moore K."/>
            <person name="Hurst S.M."/>
            <person name="Lucas M."/>
            <person name="Rochet M."/>
            <person name="Gaillardin C."/>
            <person name="Tallada V.A."/>
            <person name="Garzon A."/>
            <person name="Thode G."/>
            <person name="Daga R.R."/>
            <person name="Cruzado L."/>
            <person name="Jimenez J."/>
            <person name="Sanchez M."/>
            <person name="del Rey F."/>
            <person name="Benito J."/>
            <person name="Dominguez A."/>
            <person name="Revuelta J.L."/>
            <person name="Moreno S."/>
            <person name="Armstrong J."/>
            <person name="Forsburg S.L."/>
            <person name="Cerutti L."/>
            <person name="Lowe T."/>
            <person name="McCombie W.R."/>
            <person name="Paulsen I."/>
            <person name="Potashkin J."/>
            <person name="Shpakovski G.V."/>
            <person name="Ussery D."/>
            <person name="Barrell B.G."/>
            <person name="Nurse P."/>
        </authorList>
    </citation>
    <scope>NUCLEOTIDE SEQUENCE [LARGE SCALE GENOMIC DNA]</scope>
    <source>
        <strain>972 / ATCC 24843</strain>
    </source>
</reference>
<sequence length="130" mass="14760">MVRQSVLADCLNNIVNAERRGRRQVLIRPSSKVIVKFLTVMQKHGYIDEFTEIDDHRSGKIVIQLNGRINKCGVISPRFNVKLKDIEKWVNQLLPSRQVGVIVLTTSRGIMSHNEARAKDAGGKILGFFY</sequence>
<evidence type="ECO:0000250" key="1">
    <source>
        <dbReference type="UniProtKB" id="Q3E7Y3"/>
    </source>
</evidence>
<evidence type="ECO:0000305" key="2"/>
<comment type="function">
    <text evidence="1">Component of the ribosome, a large ribonucleoprotein complex responsible for the synthesis of proteins in the cell. The small ribosomal subunit (SSU) binds messenger RNAs (mRNAs) and translates the encoded message by selecting cognate aminoacyl-transfer RNA (tRNA) molecules. The large subunit (LSU) contains the ribosomal catalytic site termed the peptidyl transferase center (PTC), which catalyzes the formation of peptide bonds, thereby polymerizing the amino acids delivered by tRNAs into a polypeptide chain. The nascent polypeptides leave the ribosome through a tunnel in the LSU and interact with protein factors that function in enzymatic processing, targeting, and the membrane insertion of nascent chains at the exit of the ribosomal tunnel.</text>
</comment>
<comment type="subunit">
    <text evidence="1">Component of the small ribosomal subunit (SSU). Mature yeast ribosomes consist of a small (40S) and a large (60S) subunit. The 40S small subunit contains 1 molecule of ribosomal RNA (18S rRNA) and at least 33 different proteins. The large 60S subunit contains 3 rRNA molecules (25S, 5.8S and 5S rRNA) and at least 46 different proteins.</text>
</comment>
<comment type="subcellular location">
    <subcellularLocation>
        <location evidence="1">Cytoplasm</location>
    </subcellularLocation>
</comment>
<comment type="miscellaneous">
    <text>There are 2 genes for uS8 in S.pombe.</text>
</comment>
<comment type="similarity">
    <text evidence="2">Belongs to the universal ribosomal protein uS8 family.</text>
</comment>
<accession>P0CT59</accession>
<accession>O14469</accession>
<feature type="chain" id="PRO_0000433422" description="Small ribosomal subunit protein uS8B">
    <location>
        <begin position="1"/>
        <end position="130"/>
    </location>
</feature>
<organism>
    <name type="scientific">Schizosaccharomyces pombe (strain 972 / ATCC 24843)</name>
    <name type="common">Fission yeast</name>
    <dbReference type="NCBI Taxonomy" id="284812"/>
    <lineage>
        <taxon>Eukaryota</taxon>
        <taxon>Fungi</taxon>
        <taxon>Dikarya</taxon>
        <taxon>Ascomycota</taxon>
        <taxon>Taphrinomycotina</taxon>
        <taxon>Schizosaccharomycetes</taxon>
        <taxon>Schizosaccharomycetales</taxon>
        <taxon>Schizosaccharomycetaceae</taxon>
        <taxon>Schizosaccharomyces</taxon>
    </lineage>
</organism>
<dbReference type="EMBL" id="CU329670">
    <property type="protein sequence ID" value="CAB10850.1"/>
    <property type="molecule type" value="Genomic_DNA"/>
</dbReference>
<dbReference type="PIR" id="T43373">
    <property type="entry name" value="T43373"/>
</dbReference>
<dbReference type="RefSeq" id="NP_593367.1">
    <property type="nucleotide sequence ID" value="NM_001018799.2"/>
</dbReference>
<dbReference type="SMR" id="P0CT59"/>
<dbReference type="FunCoup" id="P0CT59">
    <property type="interactions" value="448"/>
</dbReference>
<dbReference type="STRING" id="284812.P0CT59"/>
<dbReference type="iPTMnet" id="P0CT59"/>
<dbReference type="EnsemblFungi" id="SPAC22A12.04c.1">
    <property type="protein sequence ID" value="SPAC22A12.04c.1:pep"/>
    <property type="gene ID" value="SPAC22A12.04c"/>
</dbReference>
<dbReference type="EnsemblFungi" id="SPAC5D6.01.1">
    <property type="protein sequence ID" value="SPAC5D6.01.1:pep"/>
    <property type="gene ID" value="SPAC5D6.01"/>
</dbReference>
<dbReference type="KEGG" id="spo:2541838"/>
<dbReference type="PomBase" id="SPAC5D6.01">
    <property type="gene designation" value="rps2202"/>
</dbReference>
<dbReference type="VEuPathDB" id="FungiDB:SPAC22A12.04c"/>
<dbReference type="VEuPathDB" id="FungiDB:SPAC5D6.01"/>
<dbReference type="InParanoid" id="P0CT59"/>
<dbReference type="OMA" id="LPAKNFG"/>
<dbReference type="PhylomeDB" id="P0CT59"/>
<dbReference type="Reactome" id="R-SPO-156827">
    <property type="pathway name" value="L13a-mediated translational silencing of Ceruloplasmin expression"/>
</dbReference>
<dbReference type="Reactome" id="R-SPO-1799339">
    <property type="pathway name" value="SRP-dependent cotranslational protein targeting to membrane"/>
</dbReference>
<dbReference type="Reactome" id="R-SPO-72649">
    <property type="pathway name" value="Translation initiation complex formation"/>
</dbReference>
<dbReference type="Reactome" id="R-SPO-72689">
    <property type="pathway name" value="Formation of a pool of free 40S subunits"/>
</dbReference>
<dbReference type="Reactome" id="R-SPO-72695">
    <property type="pathway name" value="Formation of the ternary complex, and subsequently, the 43S complex"/>
</dbReference>
<dbReference type="Reactome" id="R-SPO-72702">
    <property type="pathway name" value="Ribosomal scanning and start codon recognition"/>
</dbReference>
<dbReference type="Reactome" id="R-SPO-72706">
    <property type="pathway name" value="GTP hydrolysis and joining of the 60S ribosomal subunit"/>
</dbReference>
<dbReference type="Reactome" id="R-SPO-975956">
    <property type="pathway name" value="Nonsense Mediated Decay (NMD) independent of the Exon Junction Complex (EJC)"/>
</dbReference>
<dbReference type="Reactome" id="R-SPO-975957">
    <property type="pathway name" value="Nonsense Mediated Decay (NMD) enhanced by the Exon Junction Complex (EJC)"/>
</dbReference>
<dbReference type="PRO" id="PR:P0CT59"/>
<dbReference type="Proteomes" id="UP000002485">
    <property type="component" value="Chromosome I"/>
</dbReference>
<dbReference type="ExpressionAtlas" id="P0CT59">
    <property type="expression patterns" value="differential"/>
</dbReference>
<dbReference type="GO" id="GO:0022627">
    <property type="term" value="C:cytosolic small ribosomal subunit"/>
    <property type="evidence" value="ECO:0000318"/>
    <property type="project" value="GO_Central"/>
</dbReference>
<dbReference type="GO" id="GO:0003735">
    <property type="term" value="F:structural constituent of ribosome"/>
    <property type="evidence" value="ECO:0000318"/>
    <property type="project" value="GO_Central"/>
</dbReference>
<dbReference type="GO" id="GO:0002181">
    <property type="term" value="P:cytoplasmic translation"/>
    <property type="evidence" value="ECO:0000266"/>
    <property type="project" value="PomBase"/>
</dbReference>
<dbReference type="FunFam" id="3.30.1370.30:FF:000001">
    <property type="entry name" value="40S ribosomal protein S15a"/>
    <property type="match status" value="1"/>
</dbReference>
<dbReference type="FunFam" id="3.30.1490.10:FF:000002">
    <property type="entry name" value="40S ribosomal protein S15a"/>
    <property type="match status" value="1"/>
</dbReference>
<dbReference type="Gene3D" id="3.30.1370.30">
    <property type="match status" value="1"/>
</dbReference>
<dbReference type="Gene3D" id="3.30.1490.10">
    <property type="match status" value="1"/>
</dbReference>
<dbReference type="InterPro" id="IPR000630">
    <property type="entry name" value="Ribosomal_uS8"/>
</dbReference>
<dbReference type="InterPro" id="IPR047863">
    <property type="entry name" value="Ribosomal_uS8_CS"/>
</dbReference>
<dbReference type="InterPro" id="IPR035987">
    <property type="entry name" value="Ribosomal_uS8_sf"/>
</dbReference>
<dbReference type="NCBIfam" id="NF003115">
    <property type="entry name" value="PRK04034.1"/>
    <property type="match status" value="1"/>
</dbReference>
<dbReference type="PANTHER" id="PTHR11758">
    <property type="entry name" value="40S RIBOSOMAL PROTEIN S15A"/>
    <property type="match status" value="1"/>
</dbReference>
<dbReference type="Pfam" id="PF00410">
    <property type="entry name" value="Ribosomal_S8"/>
    <property type="match status" value="1"/>
</dbReference>
<dbReference type="SUPFAM" id="SSF56047">
    <property type="entry name" value="Ribosomal protein S8"/>
    <property type="match status" value="1"/>
</dbReference>
<dbReference type="PROSITE" id="PS00053">
    <property type="entry name" value="RIBOSOMAL_S8"/>
    <property type="match status" value="1"/>
</dbReference>